<reference key="1">
    <citation type="journal article" date="2008" name="Genome Res.">
        <title>Comparative genome analysis of Salmonella enteritidis PT4 and Salmonella gallinarum 287/91 provides insights into evolutionary and host adaptation pathways.</title>
        <authorList>
            <person name="Thomson N.R."/>
            <person name="Clayton D.J."/>
            <person name="Windhorst D."/>
            <person name="Vernikos G."/>
            <person name="Davidson S."/>
            <person name="Churcher C."/>
            <person name="Quail M.A."/>
            <person name="Stevens M."/>
            <person name="Jones M.A."/>
            <person name="Watson M."/>
            <person name="Barron A."/>
            <person name="Layton A."/>
            <person name="Pickard D."/>
            <person name="Kingsley R.A."/>
            <person name="Bignell A."/>
            <person name="Clark L."/>
            <person name="Harris B."/>
            <person name="Ormond D."/>
            <person name="Abdellah Z."/>
            <person name="Brooks K."/>
            <person name="Cherevach I."/>
            <person name="Chillingworth T."/>
            <person name="Woodward J."/>
            <person name="Norberczak H."/>
            <person name="Lord A."/>
            <person name="Arrowsmith C."/>
            <person name="Jagels K."/>
            <person name="Moule S."/>
            <person name="Mungall K."/>
            <person name="Saunders M."/>
            <person name="Whitehead S."/>
            <person name="Chabalgoity J.A."/>
            <person name="Maskell D."/>
            <person name="Humphreys T."/>
            <person name="Roberts M."/>
            <person name="Barrow P.A."/>
            <person name="Dougan G."/>
            <person name="Parkhill J."/>
        </authorList>
    </citation>
    <scope>NUCLEOTIDE SEQUENCE [LARGE SCALE GENOMIC DNA]</scope>
    <source>
        <strain>287/91 / NCTC 13346</strain>
    </source>
</reference>
<proteinExistence type="inferred from homology"/>
<protein>
    <recommendedName>
        <fullName evidence="1">2-isopropylmalate synthase</fullName>
        <ecNumber evidence="1">2.3.3.13</ecNumber>
    </recommendedName>
    <alternativeName>
        <fullName evidence="1">Alpha-IPM synthase</fullName>
    </alternativeName>
    <alternativeName>
        <fullName evidence="1">Alpha-isopropylmalate synthase</fullName>
    </alternativeName>
</protein>
<organism>
    <name type="scientific">Salmonella gallinarum (strain 287/91 / NCTC 13346)</name>
    <dbReference type="NCBI Taxonomy" id="550538"/>
    <lineage>
        <taxon>Bacteria</taxon>
        <taxon>Pseudomonadati</taxon>
        <taxon>Pseudomonadota</taxon>
        <taxon>Gammaproteobacteria</taxon>
        <taxon>Enterobacterales</taxon>
        <taxon>Enterobacteriaceae</taxon>
        <taxon>Salmonella</taxon>
    </lineage>
</organism>
<evidence type="ECO:0000255" key="1">
    <source>
        <dbReference type="HAMAP-Rule" id="MF_01025"/>
    </source>
</evidence>
<comment type="function">
    <text evidence="1">Catalyzes the condensation of the acetyl group of acetyl-CoA with 3-methyl-2-oxobutanoate (2-ketoisovalerate) to form 3-carboxy-3-hydroxy-4-methylpentanoate (2-isopropylmalate).</text>
</comment>
<comment type="catalytic activity">
    <reaction evidence="1">
        <text>3-methyl-2-oxobutanoate + acetyl-CoA + H2O = (2S)-2-isopropylmalate + CoA + H(+)</text>
        <dbReference type="Rhea" id="RHEA:21524"/>
        <dbReference type="ChEBI" id="CHEBI:1178"/>
        <dbReference type="ChEBI" id="CHEBI:11851"/>
        <dbReference type="ChEBI" id="CHEBI:15377"/>
        <dbReference type="ChEBI" id="CHEBI:15378"/>
        <dbReference type="ChEBI" id="CHEBI:57287"/>
        <dbReference type="ChEBI" id="CHEBI:57288"/>
        <dbReference type="EC" id="2.3.3.13"/>
    </reaction>
</comment>
<comment type="cofactor">
    <cofactor evidence="1">
        <name>Mn(2+)</name>
        <dbReference type="ChEBI" id="CHEBI:29035"/>
    </cofactor>
</comment>
<comment type="pathway">
    <text evidence="1">Amino-acid biosynthesis; L-leucine biosynthesis; L-leucine from 3-methyl-2-oxobutanoate: step 1/4.</text>
</comment>
<comment type="subunit">
    <text evidence="1">Homodimer.</text>
</comment>
<comment type="subcellular location">
    <subcellularLocation>
        <location evidence="1">Cytoplasm</location>
    </subcellularLocation>
</comment>
<comment type="similarity">
    <text evidence="1">Belongs to the alpha-IPM synthase/homocitrate synthase family. LeuA type 1 subfamily.</text>
</comment>
<feature type="chain" id="PRO_1000149268" description="2-isopropylmalate synthase">
    <location>
        <begin position="1"/>
        <end position="523"/>
    </location>
</feature>
<feature type="domain" description="Pyruvate carboxyltransferase" evidence="1">
    <location>
        <begin position="5"/>
        <end position="267"/>
    </location>
</feature>
<feature type="region of interest" description="Regulatory domain" evidence="1">
    <location>
        <begin position="392"/>
        <end position="523"/>
    </location>
</feature>
<feature type="binding site" evidence="1">
    <location>
        <position position="14"/>
    </location>
    <ligand>
        <name>Mn(2+)</name>
        <dbReference type="ChEBI" id="CHEBI:29035"/>
    </ligand>
</feature>
<feature type="binding site" evidence="1">
    <location>
        <position position="202"/>
    </location>
    <ligand>
        <name>Mn(2+)</name>
        <dbReference type="ChEBI" id="CHEBI:29035"/>
    </ligand>
</feature>
<feature type="binding site" evidence="1">
    <location>
        <position position="204"/>
    </location>
    <ligand>
        <name>Mn(2+)</name>
        <dbReference type="ChEBI" id="CHEBI:29035"/>
    </ligand>
</feature>
<feature type="binding site" evidence="1">
    <location>
        <position position="238"/>
    </location>
    <ligand>
        <name>Mn(2+)</name>
        <dbReference type="ChEBI" id="CHEBI:29035"/>
    </ligand>
</feature>
<dbReference type="EC" id="2.3.3.13" evidence="1"/>
<dbReference type="EMBL" id="AM933173">
    <property type="protein sequence ID" value="CAR36021.1"/>
    <property type="molecule type" value="Genomic_DNA"/>
</dbReference>
<dbReference type="RefSeq" id="WP_000082819.1">
    <property type="nucleotide sequence ID" value="NC_011274.1"/>
</dbReference>
<dbReference type="SMR" id="B5RGE4"/>
<dbReference type="KEGG" id="seg:SG0115"/>
<dbReference type="HOGENOM" id="CLU_022158_0_1_6"/>
<dbReference type="UniPathway" id="UPA00048">
    <property type="reaction ID" value="UER00070"/>
</dbReference>
<dbReference type="Proteomes" id="UP000008321">
    <property type="component" value="Chromosome"/>
</dbReference>
<dbReference type="GO" id="GO:0005829">
    <property type="term" value="C:cytosol"/>
    <property type="evidence" value="ECO:0007669"/>
    <property type="project" value="TreeGrafter"/>
</dbReference>
<dbReference type="GO" id="GO:0003852">
    <property type="term" value="F:2-isopropylmalate synthase activity"/>
    <property type="evidence" value="ECO:0007669"/>
    <property type="project" value="UniProtKB-UniRule"/>
</dbReference>
<dbReference type="GO" id="GO:0003985">
    <property type="term" value="F:acetyl-CoA C-acetyltransferase activity"/>
    <property type="evidence" value="ECO:0007669"/>
    <property type="project" value="UniProtKB-UniRule"/>
</dbReference>
<dbReference type="GO" id="GO:0030145">
    <property type="term" value="F:manganese ion binding"/>
    <property type="evidence" value="ECO:0007669"/>
    <property type="project" value="UniProtKB-UniRule"/>
</dbReference>
<dbReference type="GO" id="GO:0009098">
    <property type="term" value="P:L-leucine biosynthetic process"/>
    <property type="evidence" value="ECO:0007669"/>
    <property type="project" value="UniProtKB-UniRule"/>
</dbReference>
<dbReference type="CDD" id="cd07940">
    <property type="entry name" value="DRE_TIM_IPMS"/>
    <property type="match status" value="1"/>
</dbReference>
<dbReference type="FunFam" id="1.10.238.260:FF:000001">
    <property type="entry name" value="2-isopropylmalate synthase"/>
    <property type="match status" value="1"/>
</dbReference>
<dbReference type="FunFam" id="3.20.20.70:FF:000010">
    <property type="entry name" value="2-isopropylmalate synthase"/>
    <property type="match status" value="1"/>
</dbReference>
<dbReference type="FunFam" id="3.30.160.270:FF:000001">
    <property type="entry name" value="2-isopropylmalate synthase"/>
    <property type="match status" value="1"/>
</dbReference>
<dbReference type="Gene3D" id="1.10.238.260">
    <property type="match status" value="1"/>
</dbReference>
<dbReference type="Gene3D" id="3.30.160.270">
    <property type="match status" value="1"/>
</dbReference>
<dbReference type="Gene3D" id="3.20.20.70">
    <property type="entry name" value="Aldolase class I"/>
    <property type="match status" value="1"/>
</dbReference>
<dbReference type="HAMAP" id="MF_01025">
    <property type="entry name" value="LeuA_type1"/>
    <property type="match status" value="1"/>
</dbReference>
<dbReference type="InterPro" id="IPR050073">
    <property type="entry name" value="2-IPM_HCS-like"/>
</dbReference>
<dbReference type="InterPro" id="IPR013709">
    <property type="entry name" value="2-isopropylmalate_synth_dimer"/>
</dbReference>
<dbReference type="InterPro" id="IPR002034">
    <property type="entry name" value="AIPM/Hcit_synth_CS"/>
</dbReference>
<dbReference type="InterPro" id="IPR013785">
    <property type="entry name" value="Aldolase_TIM"/>
</dbReference>
<dbReference type="InterPro" id="IPR054691">
    <property type="entry name" value="LeuA/HCS_post-cat"/>
</dbReference>
<dbReference type="InterPro" id="IPR036230">
    <property type="entry name" value="LeuA_allosteric_dom_sf"/>
</dbReference>
<dbReference type="InterPro" id="IPR005671">
    <property type="entry name" value="LeuA_bact_synth"/>
</dbReference>
<dbReference type="InterPro" id="IPR000891">
    <property type="entry name" value="PYR_CT"/>
</dbReference>
<dbReference type="NCBIfam" id="TIGR00973">
    <property type="entry name" value="leuA_bact"/>
    <property type="match status" value="1"/>
</dbReference>
<dbReference type="NCBIfam" id="NF002084">
    <property type="entry name" value="PRK00915.1-1"/>
    <property type="match status" value="1"/>
</dbReference>
<dbReference type="NCBIfam" id="NF002086">
    <property type="entry name" value="PRK00915.1-3"/>
    <property type="match status" value="1"/>
</dbReference>
<dbReference type="PANTHER" id="PTHR10277:SF9">
    <property type="entry name" value="2-ISOPROPYLMALATE SYNTHASE 1, CHLOROPLASTIC-RELATED"/>
    <property type="match status" value="1"/>
</dbReference>
<dbReference type="PANTHER" id="PTHR10277">
    <property type="entry name" value="HOMOCITRATE SYNTHASE-RELATED"/>
    <property type="match status" value="1"/>
</dbReference>
<dbReference type="Pfam" id="PF22617">
    <property type="entry name" value="HCS_D2"/>
    <property type="match status" value="1"/>
</dbReference>
<dbReference type="Pfam" id="PF00682">
    <property type="entry name" value="HMGL-like"/>
    <property type="match status" value="1"/>
</dbReference>
<dbReference type="Pfam" id="PF08502">
    <property type="entry name" value="LeuA_dimer"/>
    <property type="match status" value="1"/>
</dbReference>
<dbReference type="SMART" id="SM00917">
    <property type="entry name" value="LeuA_dimer"/>
    <property type="match status" value="1"/>
</dbReference>
<dbReference type="SUPFAM" id="SSF110921">
    <property type="entry name" value="2-isopropylmalate synthase LeuA, allosteric (dimerisation) domain"/>
    <property type="match status" value="1"/>
</dbReference>
<dbReference type="SUPFAM" id="SSF51569">
    <property type="entry name" value="Aldolase"/>
    <property type="match status" value="1"/>
</dbReference>
<dbReference type="PROSITE" id="PS00815">
    <property type="entry name" value="AIPM_HOMOCIT_SYNTH_1"/>
    <property type="match status" value="1"/>
</dbReference>
<dbReference type="PROSITE" id="PS00816">
    <property type="entry name" value="AIPM_HOMOCIT_SYNTH_2"/>
    <property type="match status" value="1"/>
</dbReference>
<dbReference type="PROSITE" id="PS50991">
    <property type="entry name" value="PYR_CT"/>
    <property type="match status" value="1"/>
</dbReference>
<sequence>MSQQVIIFDTTLRDGEQALQASLSAKEKLQIALALERMGVDVMEVGFPVSSPGDFESVQTIARTIKNSRVCALARCVEKDIDVAAQALKVADAFRIHTFIATSPMHIATKLRSTLDEVIERAVYMVKRARNYTDDVEFSCEDAGRTPVDDLARVVEAAINAGARTINIPDTVGYTMPFEFAGIISGLYERVPNIDKAIISVHTHDDLGIAVGNSLAAVHAGARQVEGAMNGIGERAGNCALEEVIMAIKVRKDIMNVHTNINHHEIWRTSQTVSQICNMPIPANKAIVGSGAFAHSSGIHQDGVLKNRENYEIMTPESIGLNQIQLNLTSRSGRAAVKHRMEEMGYKDTDYNMDHLYDAFLKLADKKGQVFDYDLEALAFINKQQEEPEHFRLDYFSVQSGSSDIATASVKLACGEEIKAEAANGNGPVDAIYQAINRITGYDVELVKYDLNAKGQGKDALGQVDIVVNHHGRRFHGVGLATDIVESSAKAMVHVLNNIWRAAEVEKELQRKAQNKENNKETV</sequence>
<name>LEU1_SALG2</name>
<gene>
    <name evidence="1" type="primary">leuA</name>
    <name type="ordered locus">SG0115</name>
</gene>
<keyword id="KW-0028">Amino-acid biosynthesis</keyword>
<keyword id="KW-0100">Branched-chain amino acid biosynthesis</keyword>
<keyword id="KW-0963">Cytoplasm</keyword>
<keyword id="KW-0432">Leucine biosynthesis</keyword>
<keyword id="KW-0464">Manganese</keyword>
<keyword id="KW-0479">Metal-binding</keyword>
<keyword id="KW-0808">Transferase</keyword>
<accession>B5RGE4</accession>